<protein>
    <recommendedName>
        <fullName evidence="1">ATP synthase subunit delta</fullName>
    </recommendedName>
    <alternativeName>
        <fullName evidence="1">ATP synthase F(1) sector subunit delta</fullName>
    </alternativeName>
    <alternativeName>
        <fullName evidence="1">F-type ATPase subunit delta</fullName>
        <shortName evidence="1">F-ATPase subunit delta</shortName>
    </alternativeName>
</protein>
<keyword id="KW-0066">ATP synthesis</keyword>
<keyword id="KW-0997">Cell inner membrane</keyword>
<keyword id="KW-1003">Cell membrane</keyword>
<keyword id="KW-0139">CF(1)</keyword>
<keyword id="KW-0375">Hydrogen ion transport</keyword>
<keyword id="KW-0406">Ion transport</keyword>
<keyword id="KW-0472">Membrane</keyword>
<keyword id="KW-0813">Transport</keyword>
<reference key="1">
    <citation type="journal article" date="2006" name="Nat. Biotechnol.">
        <title>Complete genome sequence of the entomopathogenic and metabolically versatile soil bacterium Pseudomonas entomophila.</title>
        <authorList>
            <person name="Vodovar N."/>
            <person name="Vallenet D."/>
            <person name="Cruveiller S."/>
            <person name="Rouy Z."/>
            <person name="Barbe V."/>
            <person name="Acosta C."/>
            <person name="Cattolico L."/>
            <person name="Jubin C."/>
            <person name="Lajus A."/>
            <person name="Segurens B."/>
            <person name="Vacherie B."/>
            <person name="Wincker P."/>
            <person name="Weissenbach J."/>
            <person name="Lemaitre B."/>
            <person name="Medigue C."/>
            <person name="Boccard F."/>
        </authorList>
    </citation>
    <scope>NUCLEOTIDE SEQUENCE [LARGE SCALE GENOMIC DNA]</scope>
    <source>
        <strain>L48</strain>
    </source>
</reference>
<comment type="function">
    <text evidence="1">F(1)F(0) ATP synthase produces ATP from ADP in the presence of a proton or sodium gradient. F-type ATPases consist of two structural domains, F(1) containing the extramembraneous catalytic core and F(0) containing the membrane proton channel, linked together by a central stalk and a peripheral stalk. During catalysis, ATP synthesis in the catalytic domain of F(1) is coupled via a rotary mechanism of the central stalk subunits to proton translocation.</text>
</comment>
<comment type="function">
    <text evidence="1">This protein is part of the stalk that links CF(0) to CF(1). It either transmits conformational changes from CF(0) to CF(1) or is implicated in proton conduction.</text>
</comment>
<comment type="subunit">
    <text evidence="1">F-type ATPases have 2 components, F(1) - the catalytic core - and F(0) - the membrane proton channel. F(1) has five subunits: alpha(3), beta(3), gamma(1), delta(1), epsilon(1). F(0) has three main subunits: a(1), b(2) and c(10-14). The alpha and beta chains form an alternating ring which encloses part of the gamma chain. F(1) is attached to F(0) by a central stalk formed by the gamma and epsilon chains, while a peripheral stalk is formed by the delta and b chains.</text>
</comment>
<comment type="subcellular location">
    <subcellularLocation>
        <location evidence="1">Cell inner membrane</location>
        <topology evidence="1">Peripheral membrane protein</topology>
    </subcellularLocation>
</comment>
<comment type="similarity">
    <text evidence="1">Belongs to the ATPase delta chain family.</text>
</comment>
<proteinExistence type="inferred from homology"/>
<name>ATPD_PSEE4</name>
<dbReference type="EMBL" id="CT573326">
    <property type="protein sequence ID" value="CAK18152.1"/>
    <property type="molecule type" value="Genomic_DNA"/>
</dbReference>
<dbReference type="RefSeq" id="WP_011536504.1">
    <property type="nucleotide sequence ID" value="NC_008027.1"/>
</dbReference>
<dbReference type="SMR" id="Q1I2I4"/>
<dbReference type="STRING" id="384676.PSEEN5545"/>
<dbReference type="GeneID" id="32808444"/>
<dbReference type="KEGG" id="pen:PSEEN5545"/>
<dbReference type="eggNOG" id="COG0712">
    <property type="taxonomic scope" value="Bacteria"/>
</dbReference>
<dbReference type="HOGENOM" id="CLU_085114_3_0_6"/>
<dbReference type="OrthoDB" id="9816221at2"/>
<dbReference type="Proteomes" id="UP000000658">
    <property type="component" value="Chromosome"/>
</dbReference>
<dbReference type="GO" id="GO:0005886">
    <property type="term" value="C:plasma membrane"/>
    <property type="evidence" value="ECO:0007669"/>
    <property type="project" value="UniProtKB-SubCell"/>
</dbReference>
<dbReference type="GO" id="GO:0045259">
    <property type="term" value="C:proton-transporting ATP synthase complex"/>
    <property type="evidence" value="ECO:0007669"/>
    <property type="project" value="UniProtKB-KW"/>
</dbReference>
<dbReference type="GO" id="GO:0046933">
    <property type="term" value="F:proton-transporting ATP synthase activity, rotational mechanism"/>
    <property type="evidence" value="ECO:0007669"/>
    <property type="project" value="UniProtKB-UniRule"/>
</dbReference>
<dbReference type="Gene3D" id="1.10.520.20">
    <property type="entry name" value="N-terminal domain of the delta subunit of the F1F0-ATP synthase"/>
    <property type="match status" value="1"/>
</dbReference>
<dbReference type="HAMAP" id="MF_01416">
    <property type="entry name" value="ATP_synth_delta_bact"/>
    <property type="match status" value="1"/>
</dbReference>
<dbReference type="InterPro" id="IPR026015">
    <property type="entry name" value="ATP_synth_OSCP/delta_N_sf"/>
</dbReference>
<dbReference type="InterPro" id="IPR000711">
    <property type="entry name" value="ATPase_OSCP/dsu"/>
</dbReference>
<dbReference type="NCBIfam" id="TIGR01145">
    <property type="entry name" value="ATP_synt_delta"/>
    <property type="match status" value="1"/>
</dbReference>
<dbReference type="NCBIfam" id="NF004402">
    <property type="entry name" value="PRK05758.2-2"/>
    <property type="match status" value="1"/>
</dbReference>
<dbReference type="PANTHER" id="PTHR11910">
    <property type="entry name" value="ATP SYNTHASE DELTA CHAIN"/>
    <property type="match status" value="1"/>
</dbReference>
<dbReference type="Pfam" id="PF00213">
    <property type="entry name" value="OSCP"/>
    <property type="match status" value="1"/>
</dbReference>
<dbReference type="PRINTS" id="PR00125">
    <property type="entry name" value="ATPASEDELTA"/>
</dbReference>
<dbReference type="SUPFAM" id="SSF47928">
    <property type="entry name" value="N-terminal domain of the delta subunit of the F1F0-ATP synthase"/>
    <property type="match status" value="1"/>
</dbReference>
<feature type="chain" id="PRO_1000184772" description="ATP synthase subunit delta">
    <location>
        <begin position="1"/>
        <end position="178"/>
    </location>
</feature>
<organism>
    <name type="scientific">Pseudomonas entomophila (strain L48)</name>
    <dbReference type="NCBI Taxonomy" id="384676"/>
    <lineage>
        <taxon>Bacteria</taxon>
        <taxon>Pseudomonadati</taxon>
        <taxon>Pseudomonadota</taxon>
        <taxon>Gammaproteobacteria</taxon>
        <taxon>Pseudomonadales</taxon>
        <taxon>Pseudomonadaceae</taxon>
        <taxon>Pseudomonas</taxon>
    </lineage>
</organism>
<accession>Q1I2I4</accession>
<evidence type="ECO:0000255" key="1">
    <source>
        <dbReference type="HAMAP-Rule" id="MF_01416"/>
    </source>
</evidence>
<gene>
    <name evidence="1" type="primary">atpH</name>
    <name type="ordered locus">PSEEN5545</name>
</gene>
<sequence length="178" mass="19113">MAELTTLARPYAKAAFEHAQAHQQLANWSAMLGLAAAVSEDGTMQRLLKAPQLTSAEKAAAFIEVCGDKFDAQAQNFIHVAAENDRLLLLPEISALFDLYKAEQEKSVDVEVTSAFALNQEQQDKLAKVLSARLGQEVRLHASEDASLIGGVVIRAGDLVIDGSVRGKIAKLAEALKS</sequence>